<keyword id="KW-0067">ATP-binding</keyword>
<keyword id="KW-0963">Cytoplasm</keyword>
<keyword id="KW-1015">Disulfide bond</keyword>
<keyword id="KW-0547">Nucleotide-binding</keyword>
<keyword id="KW-0676">Redox-active center</keyword>
<keyword id="KW-0694">RNA-binding</keyword>
<keyword id="KW-0784">Thiamine biosynthesis</keyword>
<keyword id="KW-0808">Transferase</keyword>
<keyword id="KW-0820">tRNA-binding</keyword>
<protein>
    <recommendedName>
        <fullName evidence="1">tRNA sulfurtransferase</fullName>
        <ecNumber evidence="1">2.8.1.4</ecNumber>
    </recommendedName>
    <alternativeName>
        <fullName evidence="1">Sulfur carrier protein ThiS sulfurtransferase</fullName>
    </alternativeName>
    <alternativeName>
        <fullName evidence="1">Thiamine biosynthesis protein ThiI</fullName>
    </alternativeName>
    <alternativeName>
        <fullName evidence="1">tRNA 4-thiouridine synthase</fullName>
    </alternativeName>
</protein>
<feature type="chain" id="PRO_1000074308" description="tRNA sulfurtransferase">
    <location>
        <begin position="1"/>
        <end position="483"/>
    </location>
</feature>
<feature type="domain" description="THUMP" evidence="1">
    <location>
        <begin position="62"/>
        <end position="166"/>
    </location>
</feature>
<feature type="domain" description="Rhodanese" evidence="1">
    <location>
        <begin position="405"/>
        <end position="483"/>
    </location>
</feature>
<feature type="active site" description="Cysteine persulfide intermediate" evidence="1">
    <location>
        <position position="457"/>
    </location>
</feature>
<feature type="binding site" evidence="1">
    <location>
        <begin position="184"/>
        <end position="185"/>
    </location>
    <ligand>
        <name>ATP</name>
        <dbReference type="ChEBI" id="CHEBI:30616"/>
    </ligand>
</feature>
<feature type="binding site" evidence="1">
    <location>
        <position position="266"/>
    </location>
    <ligand>
        <name>ATP</name>
        <dbReference type="ChEBI" id="CHEBI:30616"/>
    </ligand>
</feature>
<feature type="binding site" evidence="1">
    <location>
        <position position="288"/>
    </location>
    <ligand>
        <name>ATP</name>
        <dbReference type="ChEBI" id="CHEBI:30616"/>
    </ligand>
</feature>
<feature type="binding site" evidence="1">
    <location>
        <position position="297"/>
    </location>
    <ligand>
        <name>ATP</name>
        <dbReference type="ChEBI" id="CHEBI:30616"/>
    </ligand>
</feature>
<feature type="disulfide bond" description="Redox-active" evidence="1">
    <location>
        <begin position="345"/>
        <end position="457"/>
    </location>
</feature>
<organism>
    <name type="scientific">Yersinia enterocolitica serotype O:8 / biotype 1B (strain NCTC 13174 / 8081)</name>
    <dbReference type="NCBI Taxonomy" id="393305"/>
    <lineage>
        <taxon>Bacteria</taxon>
        <taxon>Pseudomonadati</taxon>
        <taxon>Pseudomonadota</taxon>
        <taxon>Gammaproteobacteria</taxon>
        <taxon>Enterobacterales</taxon>
        <taxon>Yersiniaceae</taxon>
        <taxon>Yersinia</taxon>
    </lineage>
</organism>
<sequence>MKFIIKLFPEITIKSQSVRLRFIKILTTNIRNVLKNLEDDTLAVVRHWDHIEIRTKDDNLGPQICDALTRVPGIHHILEVEDRSYTDMHNIFEQTLEAYRETLIGKTFCVRVKRRGKHEFSSGDVERYVGGGLNQHIESAKVKLTHPQVTVHLEIDQDKLTLIKARHEGLGGFPIGTQEDVLSLISGGFDSGVSSYMLMRRGCRVHYCFFNLGGSAHEIGVKQVAHYLWNRFGSSHRVRFVAIDFEPVVGEILEKVEDGQMGVVLKRMMVRAASQVAERYGVQALVTGEALGQVSSQTLTNLRLIDNASDTLILRPLISHDKEHIINLAREIGTEDFAKTMPEYCGVISKSPTVKAVKAKIEEEESHFDFSILDRVVNEAKNVDIREIAAQSREQVVEVETVAELADTDVLLDIRAPDEQDEKPLKLDGIEVRTLPFYKLSTQFADLDQSKSYLLYCDRGVMSRLQALYLREQGYTNVKVYRP</sequence>
<proteinExistence type="inferred from homology"/>
<evidence type="ECO:0000255" key="1">
    <source>
        <dbReference type="HAMAP-Rule" id="MF_00021"/>
    </source>
</evidence>
<name>THII_YERE8</name>
<reference key="1">
    <citation type="journal article" date="2006" name="PLoS Genet.">
        <title>The complete genome sequence and comparative genome analysis of the high pathogenicity Yersinia enterocolitica strain 8081.</title>
        <authorList>
            <person name="Thomson N.R."/>
            <person name="Howard S."/>
            <person name="Wren B.W."/>
            <person name="Holden M.T.G."/>
            <person name="Crossman L."/>
            <person name="Challis G.L."/>
            <person name="Churcher C."/>
            <person name="Mungall K."/>
            <person name="Brooks K."/>
            <person name="Chillingworth T."/>
            <person name="Feltwell T."/>
            <person name="Abdellah Z."/>
            <person name="Hauser H."/>
            <person name="Jagels K."/>
            <person name="Maddison M."/>
            <person name="Moule S."/>
            <person name="Sanders M."/>
            <person name="Whitehead S."/>
            <person name="Quail M.A."/>
            <person name="Dougan G."/>
            <person name="Parkhill J."/>
            <person name="Prentice M.B."/>
        </authorList>
    </citation>
    <scope>NUCLEOTIDE SEQUENCE [LARGE SCALE GENOMIC DNA]</scope>
    <source>
        <strain>NCTC 13174 / 8081</strain>
    </source>
</reference>
<dbReference type="EC" id="2.8.1.4" evidence="1"/>
<dbReference type="EMBL" id="AM286415">
    <property type="protein sequence ID" value="CAL13186.1"/>
    <property type="molecule type" value="Genomic_DNA"/>
</dbReference>
<dbReference type="RefSeq" id="WP_011816904.1">
    <property type="nucleotide sequence ID" value="NC_008800.1"/>
</dbReference>
<dbReference type="RefSeq" id="YP_001007333.1">
    <property type="nucleotide sequence ID" value="NC_008800.1"/>
</dbReference>
<dbReference type="SMR" id="A1JNR2"/>
<dbReference type="KEGG" id="yen:YE3151"/>
<dbReference type="PATRIC" id="fig|393305.7.peg.3354"/>
<dbReference type="eggNOG" id="COG0301">
    <property type="taxonomic scope" value="Bacteria"/>
</dbReference>
<dbReference type="eggNOG" id="COG0607">
    <property type="taxonomic scope" value="Bacteria"/>
</dbReference>
<dbReference type="HOGENOM" id="CLU_037952_4_1_6"/>
<dbReference type="OrthoDB" id="9773948at2"/>
<dbReference type="UniPathway" id="UPA00060"/>
<dbReference type="Proteomes" id="UP000000642">
    <property type="component" value="Chromosome"/>
</dbReference>
<dbReference type="GO" id="GO:0005829">
    <property type="term" value="C:cytosol"/>
    <property type="evidence" value="ECO:0007669"/>
    <property type="project" value="TreeGrafter"/>
</dbReference>
<dbReference type="GO" id="GO:0005524">
    <property type="term" value="F:ATP binding"/>
    <property type="evidence" value="ECO:0007669"/>
    <property type="project" value="UniProtKB-UniRule"/>
</dbReference>
<dbReference type="GO" id="GO:0004810">
    <property type="term" value="F:CCA tRNA nucleotidyltransferase activity"/>
    <property type="evidence" value="ECO:0007669"/>
    <property type="project" value="InterPro"/>
</dbReference>
<dbReference type="GO" id="GO:0000049">
    <property type="term" value="F:tRNA binding"/>
    <property type="evidence" value="ECO:0007669"/>
    <property type="project" value="UniProtKB-UniRule"/>
</dbReference>
<dbReference type="GO" id="GO:0140741">
    <property type="term" value="F:tRNA-uracil-4 sulfurtransferase activity"/>
    <property type="evidence" value="ECO:0007669"/>
    <property type="project" value="UniProtKB-EC"/>
</dbReference>
<dbReference type="GO" id="GO:0009228">
    <property type="term" value="P:thiamine biosynthetic process"/>
    <property type="evidence" value="ECO:0007669"/>
    <property type="project" value="UniProtKB-KW"/>
</dbReference>
<dbReference type="GO" id="GO:0009229">
    <property type="term" value="P:thiamine diphosphate biosynthetic process"/>
    <property type="evidence" value="ECO:0007669"/>
    <property type="project" value="UniProtKB-UniRule"/>
</dbReference>
<dbReference type="GO" id="GO:0052837">
    <property type="term" value="P:thiazole biosynthetic process"/>
    <property type="evidence" value="ECO:0007669"/>
    <property type="project" value="InterPro"/>
</dbReference>
<dbReference type="GO" id="GO:0002937">
    <property type="term" value="P:tRNA 4-thiouridine biosynthesis"/>
    <property type="evidence" value="ECO:0007669"/>
    <property type="project" value="TreeGrafter"/>
</dbReference>
<dbReference type="CDD" id="cd01712">
    <property type="entry name" value="PPase_ThiI"/>
    <property type="match status" value="1"/>
</dbReference>
<dbReference type="CDD" id="cd00158">
    <property type="entry name" value="RHOD"/>
    <property type="match status" value="1"/>
</dbReference>
<dbReference type="CDD" id="cd11716">
    <property type="entry name" value="THUMP_ThiI"/>
    <property type="match status" value="1"/>
</dbReference>
<dbReference type="FunFam" id="3.30.2130.30:FF:000002">
    <property type="entry name" value="tRNA sulfurtransferase"/>
    <property type="match status" value="1"/>
</dbReference>
<dbReference type="FunFam" id="3.40.250.10:FF:000003">
    <property type="entry name" value="tRNA sulfurtransferase"/>
    <property type="match status" value="1"/>
</dbReference>
<dbReference type="FunFam" id="3.40.50.620:FF:000029">
    <property type="entry name" value="tRNA sulfurtransferase"/>
    <property type="match status" value="1"/>
</dbReference>
<dbReference type="Gene3D" id="3.30.2130.30">
    <property type="match status" value="1"/>
</dbReference>
<dbReference type="Gene3D" id="3.40.50.620">
    <property type="entry name" value="HUPs"/>
    <property type="match status" value="1"/>
</dbReference>
<dbReference type="Gene3D" id="3.40.250.10">
    <property type="entry name" value="Rhodanese-like domain"/>
    <property type="match status" value="1"/>
</dbReference>
<dbReference type="HAMAP" id="MF_00021">
    <property type="entry name" value="ThiI"/>
    <property type="match status" value="1"/>
</dbReference>
<dbReference type="InterPro" id="IPR001763">
    <property type="entry name" value="Rhodanese-like_dom"/>
</dbReference>
<dbReference type="InterPro" id="IPR036873">
    <property type="entry name" value="Rhodanese-like_dom_sf"/>
</dbReference>
<dbReference type="InterPro" id="IPR014729">
    <property type="entry name" value="Rossmann-like_a/b/a_fold"/>
</dbReference>
<dbReference type="InterPro" id="IPR020536">
    <property type="entry name" value="ThiI_AANH"/>
</dbReference>
<dbReference type="InterPro" id="IPR054173">
    <property type="entry name" value="ThiI_fer"/>
</dbReference>
<dbReference type="InterPro" id="IPR049961">
    <property type="entry name" value="ThiI_N"/>
</dbReference>
<dbReference type="InterPro" id="IPR026340">
    <property type="entry name" value="THII_Thiazole_biosynth_dom"/>
</dbReference>
<dbReference type="InterPro" id="IPR004114">
    <property type="entry name" value="THUMP_dom"/>
</dbReference>
<dbReference type="InterPro" id="IPR049962">
    <property type="entry name" value="THUMP_ThiI"/>
</dbReference>
<dbReference type="InterPro" id="IPR003720">
    <property type="entry name" value="tRNA_STrfase"/>
</dbReference>
<dbReference type="InterPro" id="IPR050102">
    <property type="entry name" value="tRNA_sulfurtransferase_ThiI"/>
</dbReference>
<dbReference type="NCBIfam" id="TIGR04271">
    <property type="entry name" value="ThiI_C_thiazole"/>
    <property type="match status" value="1"/>
</dbReference>
<dbReference type="NCBIfam" id="TIGR00342">
    <property type="entry name" value="tRNA uracil 4-sulfurtransferase ThiI"/>
    <property type="match status" value="1"/>
</dbReference>
<dbReference type="PANTHER" id="PTHR43209">
    <property type="entry name" value="TRNA SULFURTRANSFERASE"/>
    <property type="match status" value="1"/>
</dbReference>
<dbReference type="PANTHER" id="PTHR43209:SF1">
    <property type="entry name" value="TRNA SULFURTRANSFERASE"/>
    <property type="match status" value="1"/>
</dbReference>
<dbReference type="Pfam" id="PF00581">
    <property type="entry name" value="Rhodanese"/>
    <property type="match status" value="1"/>
</dbReference>
<dbReference type="Pfam" id="PF02568">
    <property type="entry name" value="ThiI"/>
    <property type="match status" value="1"/>
</dbReference>
<dbReference type="Pfam" id="PF22025">
    <property type="entry name" value="ThiI_fer"/>
    <property type="match status" value="1"/>
</dbReference>
<dbReference type="Pfam" id="PF02926">
    <property type="entry name" value="THUMP"/>
    <property type="match status" value="1"/>
</dbReference>
<dbReference type="SMART" id="SM00981">
    <property type="entry name" value="THUMP"/>
    <property type="match status" value="1"/>
</dbReference>
<dbReference type="SUPFAM" id="SSF52402">
    <property type="entry name" value="Adenine nucleotide alpha hydrolases-like"/>
    <property type="match status" value="1"/>
</dbReference>
<dbReference type="SUPFAM" id="SSF52821">
    <property type="entry name" value="Rhodanese/Cell cycle control phosphatase"/>
    <property type="match status" value="1"/>
</dbReference>
<dbReference type="SUPFAM" id="SSF143437">
    <property type="entry name" value="THUMP domain-like"/>
    <property type="match status" value="1"/>
</dbReference>
<dbReference type="PROSITE" id="PS50206">
    <property type="entry name" value="RHODANESE_3"/>
    <property type="match status" value="1"/>
</dbReference>
<dbReference type="PROSITE" id="PS51165">
    <property type="entry name" value="THUMP"/>
    <property type="match status" value="1"/>
</dbReference>
<gene>
    <name evidence="1" type="primary">thiI</name>
    <name type="ordered locus">YE3151</name>
</gene>
<comment type="function">
    <text evidence="1">Catalyzes the ATP-dependent transfer of a sulfur to tRNA to produce 4-thiouridine in position 8 of tRNAs, which functions as a near-UV photosensor. Also catalyzes the transfer of sulfur to the sulfur carrier protein ThiS, forming ThiS-thiocarboxylate. This is a step in the synthesis of thiazole, in the thiamine biosynthesis pathway. The sulfur is donated as persulfide by IscS.</text>
</comment>
<comment type="catalytic activity">
    <reaction evidence="1">
        <text>[ThiI sulfur-carrier protein]-S-sulfanyl-L-cysteine + a uridine in tRNA + 2 reduced [2Fe-2S]-[ferredoxin] + ATP + H(+) = [ThiI sulfur-carrier protein]-L-cysteine + a 4-thiouridine in tRNA + 2 oxidized [2Fe-2S]-[ferredoxin] + AMP + diphosphate</text>
        <dbReference type="Rhea" id="RHEA:24176"/>
        <dbReference type="Rhea" id="RHEA-COMP:10000"/>
        <dbReference type="Rhea" id="RHEA-COMP:10001"/>
        <dbReference type="Rhea" id="RHEA-COMP:13337"/>
        <dbReference type="Rhea" id="RHEA-COMP:13338"/>
        <dbReference type="Rhea" id="RHEA-COMP:13339"/>
        <dbReference type="Rhea" id="RHEA-COMP:13340"/>
        <dbReference type="ChEBI" id="CHEBI:15378"/>
        <dbReference type="ChEBI" id="CHEBI:29950"/>
        <dbReference type="ChEBI" id="CHEBI:30616"/>
        <dbReference type="ChEBI" id="CHEBI:33019"/>
        <dbReference type="ChEBI" id="CHEBI:33737"/>
        <dbReference type="ChEBI" id="CHEBI:33738"/>
        <dbReference type="ChEBI" id="CHEBI:61963"/>
        <dbReference type="ChEBI" id="CHEBI:65315"/>
        <dbReference type="ChEBI" id="CHEBI:136798"/>
        <dbReference type="ChEBI" id="CHEBI:456215"/>
        <dbReference type="EC" id="2.8.1.4"/>
    </reaction>
</comment>
<comment type="catalytic activity">
    <reaction evidence="1">
        <text>[ThiS sulfur-carrier protein]-C-terminal Gly-Gly-AMP + S-sulfanyl-L-cysteinyl-[cysteine desulfurase] + AH2 = [ThiS sulfur-carrier protein]-C-terminal-Gly-aminoethanethioate + L-cysteinyl-[cysteine desulfurase] + A + AMP + 2 H(+)</text>
        <dbReference type="Rhea" id="RHEA:43340"/>
        <dbReference type="Rhea" id="RHEA-COMP:12157"/>
        <dbReference type="Rhea" id="RHEA-COMP:12158"/>
        <dbReference type="Rhea" id="RHEA-COMP:12910"/>
        <dbReference type="Rhea" id="RHEA-COMP:19908"/>
        <dbReference type="ChEBI" id="CHEBI:13193"/>
        <dbReference type="ChEBI" id="CHEBI:15378"/>
        <dbReference type="ChEBI" id="CHEBI:17499"/>
        <dbReference type="ChEBI" id="CHEBI:29950"/>
        <dbReference type="ChEBI" id="CHEBI:61963"/>
        <dbReference type="ChEBI" id="CHEBI:90618"/>
        <dbReference type="ChEBI" id="CHEBI:232372"/>
        <dbReference type="ChEBI" id="CHEBI:456215"/>
    </reaction>
</comment>
<comment type="pathway">
    <text evidence="1">Cofactor biosynthesis; thiamine diphosphate biosynthesis.</text>
</comment>
<comment type="subcellular location">
    <subcellularLocation>
        <location evidence="1">Cytoplasm</location>
    </subcellularLocation>
</comment>
<comment type="similarity">
    <text evidence="1">Belongs to the ThiI family.</text>
</comment>
<accession>A1JNR2</accession>